<evidence type="ECO:0000255" key="1">
    <source>
        <dbReference type="HAMAP-Rule" id="MF_01077"/>
    </source>
</evidence>
<evidence type="ECO:0000305" key="2"/>
<comment type="function">
    <text evidence="1">Required for maturation of 30S ribosomal subunits.</text>
</comment>
<comment type="subcellular location">
    <subcellularLocation>
        <location evidence="1">Cytoplasm</location>
    </subcellularLocation>
</comment>
<comment type="similarity">
    <text evidence="1">Belongs to the RimP family.</text>
</comment>
<comment type="sequence caution" evidence="2">
    <conflict type="erroneous initiation">
        <sequence resource="EMBL-CDS" id="ABR90282"/>
    </conflict>
</comment>
<name>RIMP_JANMA</name>
<feature type="chain" id="PRO_0000384686" description="Ribosome maturation factor RimP">
    <location>
        <begin position="1"/>
        <end position="161"/>
    </location>
</feature>
<reference key="1">
    <citation type="journal article" date="2007" name="PLoS Genet.">
        <title>Genome analysis of Minibacterium massiliensis highlights the convergent evolution of water-living bacteria.</title>
        <authorList>
            <person name="Audic S."/>
            <person name="Robert C."/>
            <person name="Campagna B."/>
            <person name="Parinello H."/>
            <person name="Claverie J.-M."/>
            <person name="Raoult D."/>
            <person name="Drancourt M."/>
        </authorList>
    </citation>
    <scope>NUCLEOTIDE SEQUENCE [LARGE SCALE GENOMIC DNA]</scope>
    <source>
        <strain>Marseille</strain>
    </source>
</reference>
<gene>
    <name evidence="1" type="primary">rimP</name>
    <name type="ordered locus">mma_2497</name>
</gene>
<accession>A6T0Z0</accession>
<organism>
    <name type="scientific">Janthinobacterium sp. (strain Marseille)</name>
    <name type="common">Minibacterium massiliensis</name>
    <dbReference type="NCBI Taxonomy" id="375286"/>
    <lineage>
        <taxon>Bacteria</taxon>
        <taxon>Pseudomonadati</taxon>
        <taxon>Pseudomonadota</taxon>
        <taxon>Betaproteobacteria</taxon>
        <taxon>Burkholderiales</taxon>
        <taxon>Oxalobacteraceae</taxon>
        <taxon>Janthinobacterium</taxon>
    </lineage>
</organism>
<proteinExistence type="inferred from homology"/>
<keyword id="KW-0963">Cytoplasm</keyword>
<keyword id="KW-0690">Ribosome biogenesis</keyword>
<protein>
    <recommendedName>
        <fullName evidence="1">Ribosome maturation factor RimP</fullName>
    </recommendedName>
</protein>
<sequence length="161" mass="17855">MQLSALIEKTVVGMGYELVNFEQAARGLVRVFIDFTPEDADKGAITVEDCEKVTHQLLHVLTVENANYERLEVSSPGLDRPLKKLSDYVRFAGAEALVKLRMPMPNAANRKSFQGILQEPVGETLALEFEGNDGPAKLEFTLADVDKAHLVPQVNFRSRKA</sequence>
<dbReference type="EMBL" id="CP000269">
    <property type="protein sequence ID" value="ABR90282.1"/>
    <property type="status" value="ALT_INIT"/>
    <property type="molecule type" value="Genomic_DNA"/>
</dbReference>
<dbReference type="RefSeq" id="WP_041296583.1">
    <property type="nucleotide sequence ID" value="NC_009659.1"/>
</dbReference>
<dbReference type="SMR" id="A6T0Z0"/>
<dbReference type="STRING" id="375286.mma_2497"/>
<dbReference type="KEGG" id="mms:mma_2497"/>
<dbReference type="eggNOG" id="COG0779">
    <property type="taxonomic scope" value="Bacteria"/>
</dbReference>
<dbReference type="HOGENOM" id="CLU_070525_1_0_4"/>
<dbReference type="OrthoDB" id="9805006at2"/>
<dbReference type="Proteomes" id="UP000006388">
    <property type="component" value="Chromosome"/>
</dbReference>
<dbReference type="GO" id="GO:0005829">
    <property type="term" value="C:cytosol"/>
    <property type="evidence" value="ECO:0007669"/>
    <property type="project" value="TreeGrafter"/>
</dbReference>
<dbReference type="GO" id="GO:0000028">
    <property type="term" value="P:ribosomal small subunit assembly"/>
    <property type="evidence" value="ECO:0007669"/>
    <property type="project" value="TreeGrafter"/>
</dbReference>
<dbReference type="GO" id="GO:0006412">
    <property type="term" value="P:translation"/>
    <property type="evidence" value="ECO:0007669"/>
    <property type="project" value="TreeGrafter"/>
</dbReference>
<dbReference type="CDD" id="cd01734">
    <property type="entry name" value="YlxS_C"/>
    <property type="match status" value="1"/>
</dbReference>
<dbReference type="Gene3D" id="2.30.30.180">
    <property type="entry name" value="Ribosome maturation factor RimP, C-terminal domain"/>
    <property type="match status" value="1"/>
</dbReference>
<dbReference type="Gene3D" id="3.30.300.70">
    <property type="entry name" value="RimP-like superfamily, N-terminal"/>
    <property type="match status" value="1"/>
</dbReference>
<dbReference type="HAMAP" id="MF_01077">
    <property type="entry name" value="RimP"/>
    <property type="match status" value="1"/>
</dbReference>
<dbReference type="InterPro" id="IPR003728">
    <property type="entry name" value="Ribosome_maturation_RimP"/>
</dbReference>
<dbReference type="InterPro" id="IPR028998">
    <property type="entry name" value="RimP_C"/>
</dbReference>
<dbReference type="InterPro" id="IPR036847">
    <property type="entry name" value="RimP_C_sf"/>
</dbReference>
<dbReference type="InterPro" id="IPR028989">
    <property type="entry name" value="RimP_N"/>
</dbReference>
<dbReference type="InterPro" id="IPR035956">
    <property type="entry name" value="RimP_N_sf"/>
</dbReference>
<dbReference type="NCBIfam" id="NF000929">
    <property type="entry name" value="PRK00092.2-1"/>
    <property type="match status" value="1"/>
</dbReference>
<dbReference type="PANTHER" id="PTHR33867">
    <property type="entry name" value="RIBOSOME MATURATION FACTOR RIMP"/>
    <property type="match status" value="1"/>
</dbReference>
<dbReference type="PANTHER" id="PTHR33867:SF1">
    <property type="entry name" value="RIBOSOME MATURATION FACTOR RIMP"/>
    <property type="match status" value="1"/>
</dbReference>
<dbReference type="Pfam" id="PF17384">
    <property type="entry name" value="DUF150_C"/>
    <property type="match status" value="1"/>
</dbReference>
<dbReference type="Pfam" id="PF02576">
    <property type="entry name" value="RimP_N"/>
    <property type="match status" value="1"/>
</dbReference>
<dbReference type="SUPFAM" id="SSF74942">
    <property type="entry name" value="YhbC-like, C-terminal domain"/>
    <property type="match status" value="1"/>
</dbReference>
<dbReference type="SUPFAM" id="SSF75420">
    <property type="entry name" value="YhbC-like, N-terminal domain"/>
    <property type="match status" value="1"/>
</dbReference>